<reference key="1">
    <citation type="journal article" date="2002" name="Nature">
        <title>The genome sequence of Schizosaccharomyces pombe.</title>
        <authorList>
            <person name="Wood V."/>
            <person name="Gwilliam R."/>
            <person name="Rajandream M.A."/>
            <person name="Lyne M.H."/>
            <person name="Lyne R."/>
            <person name="Stewart A."/>
            <person name="Sgouros J.G."/>
            <person name="Peat N."/>
            <person name="Hayles J."/>
            <person name="Baker S.G."/>
            <person name="Basham D."/>
            <person name="Bowman S."/>
            <person name="Brooks K."/>
            <person name="Brown D."/>
            <person name="Brown S."/>
            <person name="Chillingworth T."/>
            <person name="Churcher C.M."/>
            <person name="Collins M."/>
            <person name="Connor R."/>
            <person name="Cronin A."/>
            <person name="Davis P."/>
            <person name="Feltwell T."/>
            <person name="Fraser A."/>
            <person name="Gentles S."/>
            <person name="Goble A."/>
            <person name="Hamlin N."/>
            <person name="Harris D.E."/>
            <person name="Hidalgo J."/>
            <person name="Hodgson G."/>
            <person name="Holroyd S."/>
            <person name="Hornsby T."/>
            <person name="Howarth S."/>
            <person name="Huckle E.J."/>
            <person name="Hunt S."/>
            <person name="Jagels K."/>
            <person name="James K.D."/>
            <person name="Jones L."/>
            <person name="Jones M."/>
            <person name="Leather S."/>
            <person name="McDonald S."/>
            <person name="McLean J."/>
            <person name="Mooney P."/>
            <person name="Moule S."/>
            <person name="Mungall K.L."/>
            <person name="Murphy L.D."/>
            <person name="Niblett D."/>
            <person name="Odell C."/>
            <person name="Oliver K."/>
            <person name="O'Neil S."/>
            <person name="Pearson D."/>
            <person name="Quail M.A."/>
            <person name="Rabbinowitsch E."/>
            <person name="Rutherford K.M."/>
            <person name="Rutter S."/>
            <person name="Saunders D."/>
            <person name="Seeger K."/>
            <person name="Sharp S."/>
            <person name="Skelton J."/>
            <person name="Simmonds M.N."/>
            <person name="Squares R."/>
            <person name="Squares S."/>
            <person name="Stevens K."/>
            <person name="Taylor K."/>
            <person name="Taylor R.G."/>
            <person name="Tivey A."/>
            <person name="Walsh S.V."/>
            <person name="Warren T."/>
            <person name="Whitehead S."/>
            <person name="Woodward J.R."/>
            <person name="Volckaert G."/>
            <person name="Aert R."/>
            <person name="Robben J."/>
            <person name="Grymonprez B."/>
            <person name="Weltjens I."/>
            <person name="Vanstreels E."/>
            <person name="Rieger M."/>
            <person name="Schaefer M."/>
            <person name="Mueller-Auer S."/>
            <person name="Gabel C."/>
            <person name="Fuchs M."/>
            <person name="Duesterhoeft A."/>
            <person name="Fritzc C."/>
            <person name="Holzer E."/>
            <person name="Moestl D."/>
            <person name="Hilbert H."/>
            <person name="Borzym K."/>
            <person name="Langer I."/>
            <person name="Beck A."/>
            <person name="Lehrach H."/>
            <person name="Reinhardt R."/>
            <person name="Pohl T.M."/>
            <person name="Eger P."/>
            <person name="Zimmermann W."/>
            <person name="Wedler H."/>
            <person name="Wambutt R."/>
            <person name="Purnelle B."/>
            <person name="Goffeau A."/>
            <person name="Cadieu E."/>
            <person name="Dreano S."/>
            <person name="Gloux S."/>
            <person name="Lelaure V."/>
            <person name="Mottier S."/>
            <person name="Galibert F."/>
            <person name="Aves S.J."/>
            <person name="Xiang Z."/>
            <person name="Hunt C."/>
            <person name="Moore K."/>
            <person name="Hurst S.M."/>
            <person name="Lucas M."/>
            <person name="Rochet M."/>
            <person name="Gaillardin C."/>
            <person name="Tallada V.A."/>
            <person name="Garzon A."/>
            <person name="Thode G."/>
            <person name="Daga R.R."/>
            <person name="Cruzado L."/>
            <person name="Jimenez J."/>
            <person name="Sanchez M."/>
            <person name="del Rey F."/>
            <person name="Benito J."/>
            <person name="Dominguez A."/>
            <person name="Revuelta J.L."/>
            <person name="Moreno S."/>
            <person name="Armstrong J."/>
            <person name="Forsburg S.L."/>
            <person name="Cerutti L."/>
            <person name="Lowe T."/>
            <person name="McCombie W.R."/>
            <person name="Paulsen I."/>
            <person name="Potashkin J."/>
            <person name="Shpakovski G.V."/>
            <person name="Ussery D."/>
            <person name="Barrell B.G."/>
            <person name="Nurse P."/>
        </authorList>
    </citation>
    <scope>NUCLEOTIDE SEQUENCE [LARGE SCALE GENOMIC DNA]</scope>
    <source>
        <strain>972 / ATCC 24843</strain>
    </source>
</reference>
<reference key="2">
    <citation type="journal article" date="2006" name="Nat. Biotechnol.">
        <title>ORFeome cloning and global analysis of protein localization in the fission yeast Schizosaccharomyces pombe.</title>
        <authorList>
            <person name="Matsuyama A."/>
            <person name="Arai R."/>
            <person name="Yashiroda Y."/>
            <person name="Shirai A."/>
            <person name="Kamata A."/>
            <person name="Sekido S."/>
            <person name="Kobayashi Y."/>
            <person name="Hashimoto A."/>
            <person name="Hamamoto M."/>
            <person name="Hiraoka Y."/>
            <person name="Horinouchi S."/>
            <person name="Yoshida M."/>
        </authorList>
    </citation>
    <scope>SUBCELLULAR LOCATION [LARGE SCALE ANALYSIS]</scope>
</reference>
<evidence type="ECO:0000255" key="1"/>
<evidence type="ECO:0000269" key="2">
    <source>
    </source>
</evidence>
<evidence type="ECO:0000305" key="3"/>
<comment type="cofactor">
    <cofactor evidence="1">
        <name>[2Fe-2S] cluster</name>
        <dbReference type="ChEBI" id="CHEBI:190135"/>
    </cofactor>
    <text evidence="1">Binds 1 [2Fe-2S] cluster.</text>
</comment>
<comment type="subcellular location">
    <subcellularLocation>
        <location evidence="2">Mitochondrion</location>
    </subcellularLocation>
</comment>
<comment type="similarity">
    <text evidence="3">Belongs to the complex I 24 kDa subunit family.</text>
</comment>
<comment type="caution">
    <text evidence="3">Was previously considered as a subunit of the NADH dehydrogenase of the mitochondrial respiratory chain complex I. Due to lack of 38 of the other 40 subunits that are present in that complex in mammals, this attribution is unlikely.</text>
</comment>
<accession>O13691</accession>
<gene>
    <name type="ORF">SPAC11E3.12</name>
</gene>
<proteinExistence type="inferred from homology"/>
<feature type="chain" id="PRO_0000020009" description="NADH-ubiquinone oxidoreductase 24 kDa subunit homolog C11E3.12, mitochondrial">
    <location>
        <begin position="1"/>
        <end position="162"/>
    </location>
</feature>
<feature type="binding site" evidence="1">
    <location>
        <position position="88"/>
    </location>
    <ligand>
        <name>[2Fe-2S] cluster</name>
        <dbReference type="ChEBI" id="CHEBI:190135"/>
    </ligand>
</feature>
<feature type="binding site" evidence="1">
    <location>
        <position position="93"/>
    </location>
    <ligand>
        <name>[2Fe-2S] cluster</name>
        <dbReference type="ChEBI" id="CHEBI:190135"/>
    </ligand>
</feature>
<feature type="binding site" evidence="1">
    <location>
        <position position="125"/>
    </location>
    <ligand>
        <name>[2Fe-2S] cluster</name>
        <dbReference type="ChEBI" id="CHEBI:190135"/>
    </ligand>
</feature>
<feature type="binding site" evidence="1">
    <location>
        <position position="129"/>
    </location>
    <ligand>
        <name>[2Fe-2S] cluster</name>
        <dbReference type="ChEBI" id="CHEBI:190135"/>
    </ligand>
</feature>
<organism>
    <name type="scientific">Schizosaccharomyces pombe (strain 972 / ATCC 24843)</name>
    <name type="common">Fission yeast</name>
    <dbReference type="NCBI Taxonomy" id="284812"/>
    <lineage>
        <taxon>Eukaryota</taxon>
        <taxon>Fungi</taxon>
        <taxon>Dikarya</taxon>
        <taxon>Ascomycota</taxon>
        <taxon>Taphrinomycotina</taxon>
        <taxon>Schizosaccharomycetes</taxon>
        <taxon>Schizosaccharomycetales</taxon>
        <taxon>Schizosaccharomycetaceae</taxon>
        <taxon>Schizosaccharomyces</taxon>
    </lineage>
</organism>
<protein>
    <recommendedName>
        <fullName>NADH-ubiquinone oxidoreductase 24 kDa subunit homolog C11E3.12, mitochondrial</fullName>
        <ecNumber>1.6.-.-</ecNumber>
    </recommendedName>
</protein>
<name>NDUV2_SCHPO</name>
<dbReference type="EC" id="1.6.-.-"/>
<dbReference type="EMBL" id="CU329670">
    <property type="protein sequence ID" value="CAB11191.1"/>
    <property type="molecule type" value="Genomic_DNA"/>
</dbReference>
<dbReference type="PIR" id="T37540">
    <property type="entry name" value="T37540"/>
</dbReference>
<dbReference type="RefSeq" id="NP_594937.1">
    <property type="nucleotide sequence ID" value="NM_001020368.2"/>
</dbReference>
<dbReference type="SMR" id="O13691"/>
<dbReference type="BioGRID" id="279395">
    <property type="interactions" value="9"/>
</dbReference>
<dbReference type="FunCoup" id="O13691">
    <property type="interactions" value="223"/>
</dbReference>
<dbReference type="STRING" id="284812.O13691"/>
<dbReference type="PaxDb" id="4896-SPAC11E3.12.1"/>
<dbReference type="EnsemblFungi" id="SPAC11E3.12.1">
    <property type="protein sequence ID" value="SPAC11E3.12.1:pep"/>
    <property type="gene ID" value="SPAC11E3.12"/>
</dbReference>
<dbReference type="PomBase" id="SPAC11E3.12"/>
<dbReference type="VEuPathDB" id="FungiDB:SPAC11E3.12"/>
<dbReference type="eggNOG" id="KOG3196">
    <property type="taxonomic scope" value="Eukaryota"/>
</dbReference>
<dbReference type="HOGENOM" id="CLU_1636373_0_0_1"/>
<dbReference type="InParanoid" id="O13691"/>
<dbReference type="OMA" id="WIPPSAM"/>
<dbReference type="PhylomeDB" id="O13691"/>
<dbReference type="PRO" id="PR:O13691"/>
<dbReference type="Proteomes" id="UP000002485">
    <property type="component" value="Chromosome I"/>
</dbReference>
<dbReference type="GO" id="GO:0005739">
    <property type="term" value="C:mitochondrion"/>
    <property type="evidence" value="ECO:0007005"/>
    <property type="project" value="PomBase"/>
</dbReference>
<dbReference type="GO" id="GO:0051537">
    <property type="term" value="F:2 iron, 2 sulfur cluster binding"/>
    <property type="evidence" value="ECO:0007669"/>
    <property type="project" value="UniProtKB-KW"/>
</dbReference>
<dbReference type="GO" id="GO:0046872">
    <property type="term" value="F:metal ion binding"/>
    <property type="evidence" value="ECO:0007669"/>
    <property type="project" value="UniProtKB-KW"/>
</dbReference>
<dbReference type="GO" id="GO:0016491">
    <property type="term" value="F:oxidoreductase activity"/>
    <property type="evidence" value="ECO:0007669"/>
    <property type="project" value="UniProtKB-KW"/>
</dbReference>
<dbReference type="GO" id="GO:0017004">
    <property type="term" value="P:cytochrome complex assembly"/>
    <property type="evidence" value="ECO:0000266"/>
    <property type="project" value="PomBase"/>
</dbReference>
<dbReference type="CDD" id="cd03064">
    <property type="entry name" value="TRX_Fd_NuoE"/>
    <property type="match status" value="1"/>
</dbReference>
<dbReference type="Gene3D" id="3.40.30.10">
    <property type="entry name" value="Glutaredoxin"/>
    <property type="match status" value="1"/>
</dbReference>
<dbReference type="Gene3D" id="1.10.10.1590">
    <property type="entry name" value="NADH-quinone oxidoreductase subunit E"/>
    <property type="match status" value="1"/>
</dbReference>
<dbReference type="InterPro" id="IPR002023">
    <property type="entry name" value="NuoE-like"/>
</dbReference>
<dbReference type="InterPro" id="IPR042128">
    <property type="entry name" value="NuoE_dom"/>
</dbReference>
<dbReference type="InterPro" id="IPR041921">
    <property type="entry name" value="NuoE_N"/>
</dbReference>
<dbReference type="InterPro" id="IPR036249">
    <property type="entry name" value="Thioredoxin-like_sf"/>
</dbReference>
<dbReference type="PANTHER" id="PTHR10371:SF3">
    <property type="entry name" value="NADH DEHYDROGENASE [UBIQUINONE] FLAVOPROTEIN 2, MITOCHONDRIAL"/>
    <property type="match status" value="1"/>
</dbReference>
<dbReference type="PANTHER" id="PTHR10371">
    <property type="entry name" value="NADH DEHYDROGENASE UBIQUINONE FLAVOPROTEIN 2, MITOCHONDRIAL"/>
    <property type="match status" value="1"/>
</dbReference>
<dbReference type="Pfam" id="PF01257">
    <property type="entry name" value="2Fe-2S_thioredx"/>
    <property type="match status" value="1"/>
</dbReference>
<dbReference type="PIRSF" id="PIRSF000216">
    <property type="entry name" value="NADH_DH_24kDa"/>
    <property type="match status" value="1"/>
</dbReference>
<dbReference type="SUPFAM" id="SSF52833">
    <property type="entry name" value="Thioredoxin-like"/>
    <property type="match status" value="1"/>
</dbReference>
<dbReference type="PROSITE" id="PS01099">
    <property type="entry name" value="COMPLEX1_24K"/>
    <property type="match status" value="1"/>
</dbReference>
<keyword id="KW-0001">2Fe-2S</keyword>
<keyword id="KW-0408">Iron</keyword>
<keyword id="KW-0411">Iron-sulfur</keyword>
<keyword id="KW-0479">Metal-binding</keyword>
<keyword id="KW-0496">Mitochondrion</keyword>
<keyword id="KW-0560">Oxidoreductase</keyword>
<keyword id="KW-1185">Reference proteome</keyword>
<sequence length="162" mass="18501">MKPIRFFKPENLQLAKAILARYPLRFQSAALVPLLDLAQRQHGTWIPPTAMYEIASLAGVSIDYVHSLILAYPNDFFWRPKKPRVRICNSWMCQQAAEEQGNSNWDSQCRSVATKYGFDVENTGCLGNCFQGPAMWINDKIYGVNTKEKLVDIMEALTQKKN</sequence>